<evidence type="ECO:0000255" key="1">
    <source>
        <dbReference type="PROSITE-ProRule" id="PRU00041"/>
    </source>
</evidence>
<evidence type="ECO:0000255" key="2">
    <source>
        <dbReference type="PROSITE-ProRule" id="PRU00270"/>
    </source>
</evidence>
<evidence type="ECO:0000255" key="3">
    <source>
        <dbReference type="PROSITE-ProRule" id="PRU00271"/>
    </source>
</evidence>
<evidence type="ECO:0000256" key="4">
    <source>
        <dbReference type="SAM" id="MobiDB-lite"/>
    </source>
</evidence>
<evidence type="ECO:0000269" key="5">
    <source>
    </source>
</evidence>
<evidence type="ECO:0000269" key="6">
    <source ref="7"/>
</evidence>
<evidence type="ECO:0000305" key="7"/>
<gene>
    <name type="primary">PLC4</name>
    <name type="synonym">ATHATPLC5</name>
    <name type="ordered locus">At5g58700</name>
    <name type="ORF">MZN1.19</name>
</gene>
<proteinExistence type="evidence at transcript level"/>
<reference key="1">
    <citation type="submission" date="2002-09" db="EMBL/GenBank/DDBJ databases">
        <title>Arabidopsis thaliana phosphoinositide specific phospholipase C.</title>
        <authorList>
            <person name="Ren D."/>
            <person name="Bhattacharyya M.K."/>
        </authorList>
    </citation>
    <scope>NUCLEOTIDE SEQUENCE [MRNA] (ISOFORM 1)</scope>
</reference>
<reference key="2">
    <citation type="journal article" date="2000" name="DNA Res.">
        <title>Structural analysis of Arabidopsis thaliana chromosome 5. X. Sequence features of the regions of 3,076,755 bp covered by sixty P1 and TAC clones.</title>
        <authorList>
            <person name="Sato S."/>
            <person name="Nakamura Y."/>
            <person name="Kaneko T."/>
            <person name="Katoh T."/>
            <person name="Asamizu E."/>
            <person name="Kotani H."/>
            <person name="Tabata S."/>
        </authorList>
    </citation>
    <scope>NUCLEOTIDE SEQUENCE [LARGE SCALE GENOMIC DNA]</scope>
    <source>
        <strain>cv. Columbia</strain>
    </source>
</reference>
<reference key="3">
    <citation type="journal article" date="2017" name="Plant J.">
        <title>Araport11: a complete reannotation of the Arabidopsis thaliana reference genome.</title>
        <authorList>
            <person name="Cheng C.Y."/>
            <person name="Krishnakumar V."/>
            <person name="Chan A.P."/>
            <person name="Thibaud-Nissen F."/>
            <person name="Schobel S."/>
            <person name="Town C.D."/>
        </authorList>
    </citation>
    <scope>GENOME REANNOTATION</scope>
    <source>
        <strain>cv. Columbia</strain>
    </source>
</reference>
<reference key="4">
    <citation type="journal article" date="2003" name="Science">
        <title>Empirical analysis of transcriptional activity in the Arabidopsis genome.</title>
        <authorList>
            <person name="Yamada K."/>
            <person name="Lim J."/>
            <person name="Dale J.M."/>
            <person name="Chen H."/>
            <person name="Shinn P."/>
            <person name="Palm C.J."/>
            <person name="Southwick A.M."/>
            <person name="Wu H.C."/>
            <person name="Kim C.J."/>
            <person name="Nguyen M."/>
            <person name="Pham P.K."/>
            <person name="Cheuk R.F."/>
            <person name="Karlin-Newmann G."/>
            <person name="Liu S.X."/>
            <person name="Lam B."/>
            <person name="Sakano H."/>
            <person name="Wu T."/>
            <person name="Yu G."/>
            <person name="Miranda M."/>
            <person name="Quach H.L."/>
            <person name="Tripp M."/>
            <person name="Chang C.H."/>
            <person name="Lee J.M."/>
            <person name="Toriumi M.J."/>
            <person name="Chan M.M."/>
            <person name="Tang C.C."/>
            <person name="Onodera C.S."/>
            <person name="Deng J.M."/>
            <person name="Akiyama K."/>
            <person name="Ansari Y."/>
            <person name="Arakawa T."/>
            <person name="Banh J."/>
            <person name="Banno F."/>
            <person name="Bowser L."/>
            <person name="Brooks S.Y."/>
            <person name="Carninci P."/>
            <person name="Chao Q."/>
            <person name="Choy N."/>
            <person name="Enju A."/>
            <person name="Goldsmith A.D."/>
            <person name="Gurjal M."/>
            <person name="Hansen N.F."/>
            <person name="Hayashizaki Y."/>
            <person name="Johnson-Hopson C."/>
            <person name="Hsuan V.W."/>
            <person name="Iida K."/>
            <person name="Karnes M."/>
            <person name="Khan S."/>
            <person name="Koesema E."/>
            <person name="Ishida J."/>
            <person name="Jiang P.X."/>
            <person name="Jones T."/>
            <person name="Kawai J."/>
            <person name="Kamiya A."/>
            <person name="Meyers C."/>
            <person name="Nakajima M."/>
            <person name="Narusaka M."/>
            <person name="Seki M."/>
            <person name="Sakurai T."/>
            <person name="Satou M."/>
            <person name="Tamse R."/>
            <person name="Vaysberg M."/>
            <person name="Wallender E.K."/>
            <person name="Wong C."/>
            <person name="Yamamura Y."/>
            <person name="Yuan S."/>
            <person name="Shinozaki K."/>
            <person name="Davis R.W."/>
            <person name="Theologis A."/>
            <person name="Ecker J.R."/>
        </authorList>
    </citation>
    <scope>NUCLEOTIDE SEQUENCE [LARGE SCALE MRNA] (ISOFORM 1)</scope>
    <source>
        <strain>cv. Columbia</strain>
    </source>
</reference>
<reference key="5">
    <citation type="submission" date="2001-08" db="EMBL/GenBank/DDBJ databases">
        <authorList>
            <person name="Pical C."/>
        </authorList>
    </citation>
    <scope>NUCLEOTIDE SEQUENCE [MRNA] OF 7-597 (ISOFORM 1)</scope>
</reference>
<reference key="6">
    <citation type="journal article" date="2002" name="Plant Physiol.">
        <title>Inositol phospholipid metabolism in Arabidopsis. Characterized and putative isoforms of inositol phospholipid kinase and phosphoinositide-specific phospholipase C.</title>
        <authorList>
            <person name="Mueller-Roeber B."/>
            <person name="Pical C."/>
        </authorList>
    </citation>
    <scope>GENE FAMILY</scope>
    <scope>NOMENCLATURE</scope>
</reference>
<reference key="7">
    <citation type="journal article" date="2004" name="New Phytol.">
        <title>Gene-specific expression and calcium activation of Arabidopsis thaliana phospholipase C isoforms.</title>
        <authorList>
            <person name="Hunt L."/>
            <person name="Otterhag L."/>
            <person name="Lee J.C."/>
            <person name="Lasheen T."/>
            <person name="Hunt J."/>
            <person name="Seki M."/>
            <person name="Shinozaki K."/>
            <person name="Sommarin M."/>
            <person name="Gilmour D.J."/>
            <person name="Pical C."/>
            <person name="Gray J.E."/>
        </authorList>
        <dbReference type="AGRICOLA" id="IND43668249"/>
    </citation>
    <scope>FUNCTION</scope>
    <scope>INDUCTION</scope>
    <scope>TISSUE SPECIFICITY</scope>
</reference>
<reference key="8">
    <citation type="journal article" date="2007" name="Protein Expr. Purif.">
        <title>Preparation of polyclonal antibody specific for AtPLC4, an Arabidopsis phosphatidylinositol-specific phospholipase C in rabbits.</title>
        <authorList>
            <person name="Cao Z."/>
            <person name="Zhang J."/>
            <person name="Li Y."/>
            <person name="Xu X."/>
            <person name="Liu G."/>
            <person name="Bhattacharrya M.K."/>
            <person name="Yang H."/>
            <person name="Ren D."/>
        </authorList>
    </citation>
    <scope>SUBCELLULAR LOCATION</scope>
</reference>
<feature type="chain" id="PRO_0000324129" description="Phosphoinositide phospholipase C 4">
    <location>
        <begin position="1"/>
        <end position="597"/>
    </location>
</feature>
<feature type="domain" description="EF-hand">
    <location>
        <begin position="26"/>
        <end position="60"/>
    </location>
</feature>
<feature type="domain" description="PI-PLC X-box" evidence="2">
    <location>
        <begin position="114"/>
        <end position="257"/>
    </location>
</feature>
<feature type="domain" description="PI-PLC Y-box" evidence="3">
    <location>
        <begin position="333"/>
        <end position="449"/>
    </location>
</feature>
<feature type="domain" description="C2" evidence="1">
    <location>
        <begin position="449"/>
        <end position="579"/>
    </location>
</feature>
<feature type="region of interest" description="Disordered" evidence="4">
    <location>
        <begin position="259"/>
        <end position="324"/>
    </location>
</feature>
<feature type="compositionally biased region" description="Basic and acidic residues" evidence="4">
    <location>
        <begin position="259"/>
        <end position="290"/>
    </location>
</feature>
<feature type="compositionally biased region" description="Polar residues" evidence="4">
    <location>
        <begin position="293"/>
        <end position="309"/>
    </location>
</feature>
<feature type="active site" evidence="2">
    <location>
        <position position="129"/>
    </location>
</feature>
<feature type="active site" evidence="2">
    <location>
        <position position="174"/>
    </location>
</feature>
<feature type="splice variant" id="VSP_032147" description="In isoform 2." evidence="7">
    <location>
        <begin position="1"/>
        <end position="108"/>
    </location>
</feature>
<feature type="splice variant" id="VSP_032148" description="In isoform 2." evidence="7">
    <original>ADQ</original>
    <variation>MFL</variation>
    <location>
        <begin position="109"/>
        <end position="111"/>
    </location>
</feature>
<dbReference type="EC" id="3.1.4.11"/>
<dbReference type="EMBL" id="AF434168">
    <property type="protein sequence ID" value="AAL30749.2"/>
    <property type="molecule type" value="mRNA"/>
</dbReference>
<dbReference type="EMBL" id="AB020755">
    <property type="protein sequence ID" value="BAA97338.1"/>
    <property type="molecule type" value="Genomic_DNA"/>
</dbReference>
<dbReference type="EMBL" id="CP002688">
    <property type="protein sequence ID" value="AED97086.1"/>
    <property type="molecule type" value="Genomic_DNA"/>
</dbReference>
<dbReference type="EMBL" id="CP002688">
    <property type="protein sequence ID" value="AED97087.1"/>
    <property type="molecule type" value="Genomic_DNA"/>
</dbReference>
<dbReference type="EMBL" id="CP002688">
    <property type="protein sequence ID" value="ANM70550.1"/>
    <property type="molecule type" value="Genomic_DNA"/>
</dbReference>
<dbReference type="EMBL" id="AY093217">
    <property type="protein sequence ID" value="AAM13216.1"/>
    <property type="molecule type" value="mRNA"/>
</dbReference>
<dbReference type="EMBL" id="BT008358">
    <property type="protein sequence ID" value="AAP37717.1"/>
    <property type="molecule type" value="mRNA"/>
</dbReference>
<dbReference type="EMBL" id="AY053422">
    <property type="protein sequence ID" value="AAL23439.1"/>
    <property type="molecule type" value="mRNA"/>
</dbReference>
<dbReference type="RefSeq" id="NP_001032097.1">
    <molecule id="Q944C1-2"/>
    <property type="nucleotide sequence ID" value="NM_001037020.2"/>
</dbReference>
<dbReference type="RefSeq" id="NP_001318832.1">
    <molecule id="Q944C1-1"/>
    <property type="nucleotide sequence ID" value="NM_001345319.1"/>
</dbReference>
<dbReference type="RefSeq" id="NP_200678.2">
    <molecule id="Q944C1-1"/>
    <property type="nucleotide sequence ID" value="NM_125257.3"/>
</dbReference>
<dbReference type="SMR" id="Q944C1"/>
<dbReference type="BioGRID" id="21228">
    <property type="interactions" value="1"/>
</dbReference>
<dbReference type="FunCoup" id="Q944C1">
    <property type="interactions" value="1090"/>
</dbReference>
<dbReference type="STRING" id="3702.Q944C1"/>
<dbReference type="iPTMnet" id="Q944C1"/>
<dbReference type="PaxDb" id="3702-AT5G58700.1"/>
<dbReference type="ProteomicsDB" id="234728">
    <molecule id="Q944C1-1"/>
</dbReference>
<dbReference type="EnsemblPlants" id="AT5G58700.1">
    <molecule id="Q944C1-1"/>
    <property type="protein sequence ID" value="AT5G58700.1"/>
    <property type="gene ID" value="AT5G58700"/>
</dbReference>
<dbReference type="EnsemblPlants" id="AT5G58700.2">
    <molecule id="Q944C1-2"/>
    <property type="protein sequence ID" value="AT5G58700.2"/>
    <property type="gene ID" value="AT5G58700"/>
</dbReference>
<dbReference type="EnsemblPlants" id="AT5G58700.3">
    <molecule id="Q944C1-1"/>
    <property type="protein sequence ID" value="AT5G58700.3"/>
    <property type="gene ID" value="AT5G58700"/>
</dbReference>
<dbReference type="GeneID" id="835984"/>
<dbReference type="Gramene" id="AT5G58700.1">
    <molecule id="Q944C1-1"/>
    <property type="protein sequence ID" value="AT5G58700.1"/>
    <property type="gene ID" value="AT5G58700"/>
</dbReference>
<dbReference type="Gramene" id="AT5G58700.2">
    <molecule id="Q944C1-2"/>
    <property type="protein sequence ID" value="AT5G58700.2"/>
    <property type="gene ID" value="AT5G58700"/>
</dbReference>
<dbReference type="Gramene" id="AT5G58700.3">
    <molecule id="Q944C1-1"/>
    <property type="protein sequence ID" value="AT5G58700.3"/>
    <property type="gene ID" value="AT5G58700"/>
</dbReference>
<dbReference type="KEGG" id="ath:AT5G58700"/>
<dbReference type="Araport" id="AT5G58700"/>
<dbReference type="TAIR" id="AT5G58700">
    <property type="gene designation" value="PLC4"/>
</dbReference>
<dbReference type="eggNOG" id="KOG0169">
    <property type="taxonomic scope" value="Eukaryota"/>
</dbReference>
<dbReference type="InParanoid" id="Q944C1"/>
<dbReference type="OMA" id="DAWDNDE"/>
<dbReference type="PhylomeDB" id="Q944C1"/>
<dbReference type="BioCyc" id="ARA:AT5G58700-MONOMER"/>
<dbReference type="BRENDA" id="3.1.4.11">
    <property type="organism ID" value="399"/>
</dbReference>
<dbReference type="PRO" id="PR:Q944C1"/>
<dbReference type="Proteomes" id="UP000006548">
    <property type="component" value="Chromosome 5"/>
</dbReference>
<dbReference type="ExpressionAtlas" id="Q944C1">
    <property type="expression patterns" value="baseline and differential"/>
</dbReference>
<dbReference type="GO" id="GO:0005829">
    <property type="term" value="C:cytosol"/>
    <property type="evidence" value="ECO:0007669"/>
    <property type="project" value="UniProtKB-SubCell"/>
</dbReference>
<dbReference type="GO" id="GO:0005886">
    <property type="term" value="C:plasma membrane"/>
    <property type="evidence" value="ECO:0007669"/>
    <property type="project" value="UniProtKB-SubCell"/>
</dbReference>
<dbReference type="GO" id="GO:0004435">
    <property type="term" value="F:phosphatidylinositol-4,5-bisphosphate phospholipase C activity"/>
    <property type="evidence" value="ECO:0007669"/>
    <property type="project" value="UniProtKB-EC"/>
</dbReference>
<dbReference type="GO" id="GO:0035556">
    <property type="term" value="P:intracellular signal transduction"/>
    <property type="evidence" value="ECO:0007669"/>
    <property type="project" value="InterPro"/>
</dbReference>
<dbReference type="GO" id="GO:0016042">
    <property type="term" value="P:lipid catabolic process"/>
    <property type="evidence" value="ECO:0007669"/>
    <property type="project" value="UniProtKB-KW"/>
</dbReference>
<dbReference type="CDD" id="cd00275">
    <property type="entry name" value="C2_PLC_like"/>
    <property type="match status" value="1"/>
</dbReference>
<dbReference type="CDD" id="cd08599">
    <property type="entry name" value="PI-PLCc_plant"/>
    <property type="match status" value="1"/>
</dbReference>
<dbReference type="FunFam" id="1.10.238.10:FF:000254">
    <property type="entry name" value="Phosphoinositide phospholipase C"/>
    <property type="match status" value="1"/>
</dbReference>
<dbReference type="FunFam" id="2.60.40.150:FF:000060">
    <property type="entry name" value="Phosphoinositide phospholipase C"/>
    <property type="match status" value="1"/>
</dbReference>
<dbReference type="Gene3D" id="2.60.40.150">
    <property type="entry name" value="C2 domain"/>
    <property type="match status" value="1"/>
</dbReference>
<dbReference type="Gene3D" id="1.10.238.10">
    <property type="entry name" value="EF-hand"/>
    <property type="match status" value="1"/>
</dbReference>
<dbReference type="Gene3D" id="3.20.20.190">
    <property type="entry name" value="Phosphatidylinositol (PI) phosphodiesterase"/>
    <property type="match status" value="1"/>
</dbReference>
<dbReference type="InterPro" id="IPR000008">
    <property type="entry name" value="C2_dom"/>
</dbReference>
<dbReference type="InterPro" id="IPR035892">
    <property type="entry name" value="C2_domain_sf"/>
</dbReference>
<dbReference type="InterPro" id="IPR011992">
    <property type="entry name" value="EF-hand-dom_pair"/>
</dbReference>
<dbReference type="InterPro" id="IPR001192">
    <property type="entry name" value="PI-PLC_fam"/>
</dbReference>
<dbReference type="InterPro" id="IPR017946">
    <property type="entry name" value="PLC-like_Pdiesterase_TIM-brl"/>
</dbReference>
<dbReference type="InterPro" id="IPR015359">
    <property type="entry name" value="PLC_EF-hand-like"/>
</dbReference>
<dbReference type="InterPro" id="IPR000909">
    <property type="entry name" value="PLipase_C_PInositol-sp_X_dom"/>
</dbReference>
<dbReference type="InterPro" id="IPR001711">
    <property type="entry name" value="PLipase_C_Pinositol-sp_Y"/>
</dbReference>
<dbReference type="PANTHER" id="PTHR10336:SF204">
    <property type="entry name" value="PHOSPHOINOSITIDE PHOSPHOLIPASE C 4-RELATED"/>
    <property type="match status" value="1"/>
</dbReference>
<dbReference type="PANTHER" id="PTHR10336">
    <property type="entry name" value="PHOSPHOINOSITIDE-SPECIFIC PHOSPHOLIPASE C FAMILY PROTEIN"/>
    <property type="match status" value="1"/>
</dbReference>
<dbReference type="Pfam" id="PF00168">
    <property type="entry name" value="C2"/>
    <property type="match status" value="1"/>
</dbReference>
<dbReference type="Pfam" id="PF09279">
    <property type="entry name" value="EF-hand_like"/>
    <property type="match status" value="1"/>
</dbReference>
<dbReference type="Pfam" id="PF00388">
    <property type="entry name" value="PI-PLC-X"/>
    <property type="match status" value="1"/>
</dbReference>
<dbReference type="Pfam" id="PF00387">
    <property type="entry name" value="PI-PLC-Y"/>
    <property type="match status" value="1"/>
</dbReference>
<dbReference type="PRINTS" id="PR00390">
    <property type="entry name" value="PHPHLIPASEC"/>
</dbReference>
<dbReference type="SMART" id="SM00239">
    <property type="entry name" value="C2"/>
    <property type="match status" value="1"/>
</dbReference>
<dbReference type="SMART" id="SM00148">
    <property type="entry name" value="PLCXc"/>
    <property type="match status" value="1"/>
</dbReference>
<dbReference type="SMART" id="SM00149">
    <property type="entry name" value="PLCYc"/>
    <property type="match status" value="1"/>
</dbReference>
<dbReference type="SUPFAM" id="SSF49562">
    <property type="entry name" value="C2 domain (Calcium/lipid-binding domain, CaLB)"/>
    <property type="match status" value="1"/>
</dbReference>
<dbReference type="SUPFAM" id="SSF47473">
    <property type="entry name" value="EF-hand"/>
    <property type="match status" value="1"/>
</dbReference>
<dbReference type="SUPFAM" id="SSF51695">
    <property type="entry name" value="PLC-like phosphodiesterases"/>
    <property type="match status" value="1"/>
</dbReference>
<dbReference type="PROSITE" id="PS50004">
    <property type="entry name" value="C2"/>
    <property type="match status" value="1"/>
</dbReference>
<dbReference type="PROSITE" id="PS50007">
    <property type="entry name" value="PIPLC_X_DOMAIN"/>
    <property type="match status" value="1"/>
</dbReference>
<dbReference type="PROSITE" id="PS50008">
    <property type="entry name" value="PIPLC_Y_DOMAIN"/>
    <property type="match status" value="1"/>
</dbReference>
<protein>
    <recommendedName>
        <fullName>Phosphoinositide phospholipase C 4</fullName>
        <ecNumber>3.1.4.11</ecNumber>
    </recommendedName>
    <alternativeName>
        <fullName>Phosphoinositide phospholipase PLC4</fullName>
        <shortName>AtPLC4</shortName>
        <shortName>PI-PLC4</shortName>
    </alternativeName>
</protein>
<organism>
    <name type="scientific">Arabidopsis thaliana</name>
    <name type="common">Mouse-ear cress</name>
    <dbReference type="NCBI Taxonomy" id="3702"/>
    <lineage>
        <taxon>Eukaryota</taxon>
        <taxon>Viridiplantae</taxon>
        <taxon>Streptophyta</taxon>
        <taxon>Embryophyta</taxon>
        <taxon>Tracheophyta</taxon>
        <taxon>Spermatophyta</taxon>
        <taxon>Magnoliopsida</taxon>
        <taxon>eudicotyledons</taxon>
        <taxon>Gunneridae</taxon>
        <taxon>Pentapetalae</taxon>
        <taxon>rosids</taxon>
        <taxon>malvids</taxon>
        <taxon>Brassicales</taxon>
        <taxon>Brassicaceae</taxon>
        <taxon>Camelineae</taxon>
        <taxon>Arabidopsis</taxon>
    </lineage>
</organism>
<name>PLCD4_ARATH</name>
<keyword id="KW-0025">Alternative splicing</keyword>
<keyword id="KW-1003">Cell membrane</keyword>
<keyword id="KW-0963">Cytoplasm</keyword>
<keyword id="KW-0378">Hydrolase</keyword>
<keyword id="KW-0442">Lipid degradation</keyword>
<keyword id="KW-0443">Lipid metabolism</keyword>
<keyword id="KW-0472">Membrane</keyword>
<keyword id="KW-1185">Reference proteome</keyword>
<keyword id="KW-0807">Transducer</keyword>
<comment type="function">
    <text evidence="6">The production of the second messenger molecules diacylglycerol (DAG) and inositol 1,4,5-trisphosphate (IP3) is mediated by activated phosphatidylinositol-specific phospholipase C enzymes.</text>
</comment>
<comment type="catalytic activity">
    <reaction>
        <text>a 1,2-diacyl-sn-glycero-3-phospho-(1D-myo-inositol-4,5-bisphosphate) + H2O = 1D-myo-inositol 1,4,5-trisphosphate + a 1,2-diacyl-sn-glycerol + H(+)</text>
        <dbReference type="Rhea" id="RHEA:33179"/>
        <dbReference type="ChEBI" id="CHEBI:15377"/>
        <dbReference type="ChEBI" id="CHEBI:15378"/>
        <dbReference type="ChEBI" id="CHEBI:17815"/>
        <dbReference type="ChEBI" id="CHEBI:58456"/>
        <dbReference type="ChEBI" id="CHEBI:203600"/>
        <dbReference type="EC" id="3.1.4.11"/>
    </reaction>
</comment>
<comment type="cofactor">
    <cofactor>
        <name>Ca(2+)</name>
        <dbReference type="ChEBI" id="CHEBI:29108"/>
    </cofactor>
</comment>
<comment type="subcellular location">
    <subcellularLocation>
        <location evidence="5">Cytoplasm</location>
        <location evidence="5">Cytosol</location>
    </subcellularLocation>
    <subcellularLocation>
        <location evidence="5">Cell membrane</location>
        <topology evidence="5">Peripheral membrane protein</topology>
    </subcellularLocation>
</comment>
<comment type="alternative products">
    <event type="alternative splicing"/>
    <isoform>
        <id>Q944C1-1</id>
        <name>1</name>
        <sequence type="displayed"/>
    </isoform>
    <isoform>
        <id>Q944C1-2</id>
        <name>2</name>
        <sequence type="described" ref="VSP_032147 VSP_032148"/>
    </isoform>
</comment>
<comment type="tissue specificity">
    <text evidence="6">Low expression in leaves, roots, flowers and siliques. Expressed in pollen and in cells of the stigma surface.</text>
</comment>
<comment type="induction">
    <text evidence="6">By environmental stresses such as dehydration, salinity and low temperature.</text>
</comment>
<accession>Q944C1</accession>
<accession>Q2V2X4</accession>
<accession>Q940R9</accession>
<accession>Q9LUY9</accession>
<sequence length="597" mass="68038">MEGKKEMGSYKFCLIFTRKFRMTESGPVEDVRDLFEKYTEGDAHMSPEQLQKLMTEEGGEGETSLEEAERIVDEVLRRKHHIAKFTRRNLTLDDFNYYLFSTDLNPPIADQVHQNMDAPLSHYFIFTGHNSYLTGNQLSSNCSELPIADALRRGVRVVELDLWPRGTDDVCVKHGRTLTKEVKLGKCLESIKANAFAISKYPVIITLEDHLTPKLQFKVAKMITQTFGDMLYYHDSQGCQEFPSPEELKEKILISTKPPKEYLEANDTKEKDNGEKGKDSDEDVWGKEPEDLISTQSDLDKVTSSVNDLNQDDEERGSCESDTSCQLQAPEYKRLIAIHAGKPKGGLRMALKVDPNKIRRLSLSEQLLEKAVASYGADVIRFTQKNFLRIYPKGTRFNSSNYKPQIGWMSGAQMIAFNMQGYGRALWLMEGMFRANGGCGYVKKPDFLMDASPNGQDFYPKDNSSPKKTLKVKVCMGDGWLLDFKKTHFDSYSPPDFFVRVGIAGAPVDEVMEKTKIEYDTWTPIWNKEFTFPLAVPELALLRVEVHEHDVNEKDDFGGQTCLPVSEIRQGIRAVPLFNRKGVKYSSTRLLMRFEFV</sequence>